<feature type="chain" id="PRO_0000054189" description="L-asparagine permease 1">
    <location>
        <begin position="1"/>
        <end position="489"/>
    </location>
</feature>
<feature type="transmembrane region" description="Helical" evidence="2">
    <location>
        <begin position="25"/>
        <end position="45"/>
    </location>
</feature>
<feature type="transmembrane region" description="Helical" evidence="2">
    <location>
        <begin position="49"/>
        <end position="69"/>
    </location>
</feature>
<feature type="transmembrane region" description="Helical" evidence="2">
    <location>
        <begin position="100"/>
        <end position="120"/>
    </location>
</feature>
<feature type="transmembrane region" description="Helical" evidence="2">
    <location>
        <begin position="137"/>
        <end position="157"/>
    </location>
</feature>
<feature type="transmembrane region" description="Helical" evidence="2">
    <location>
        <begin position="162"/>
        <end position="182"/>
    </location>
</feature>
<feature type="transmembrane region" description="Helical" evidence="2">
    <location>
        <begin position="210"/>
        <end position="230"/>
    </location>
</feature>
<feature type="transmembrane region" description="Helical" evidence="2">
    <location>
        <begin position="255"/>
        <end position="275"/>
    </location>
</feature>
<feature type="transmembrane region" description="Helical" evidence="2">
    <location>
        <begin position="289"/>
        <end position="309"/>
    </location>
</feature>
<feature type="transmembrane region" description="Helical" evidence="2">
    <location>
        <begin position="344"/>
        <end position="364"/>
    </location>
</feature>
<feature type="transmembrane region" description="Helical" evidence="2">
    <location>
        <begin position="369"/>
        <end position="389"/>
    </location>
</feature>
<feature type="transmembrane region" description="Helical" evidence="2">
    <location>
        <begin position="413"/>
        <end position="433"/>
    </location>
</feature>
<feature type="transmembrane region" description="Helical" evidence="2">
    <location>
        <begin position="439"/>
        <end position="459"/>
    </location>
</feature>
<name>ANSP1_MYCTU</name>
<protein>
    <recommendedName>
        <fullName>L-asparagine permease 1</fullName>
    </recommendedName>
    <alternativeName>
        <fullName>L-asparagine transport protein 1</fullName>
    </alternativeName>
</protein>
<accession>P9WQM9</accession>
<accession>L0TBF4</accession>
<accession>O33261</accession>
<gene>
    <name type="primary">ansP1</name>
    <name type="synonym">ansP</name>
    <name type="ordered locus">Rv2127</name>
    <name type="ORF">MTCY261.26</name>
</gene>
<proteinExistence type="evidence at protein level"/>
<sequence>MSAASQRVGAFGEEAGYHKGLKPRQLQMIGIGGAIGTGLFLGAGGRLAKAGPGLFLVYGVCGVFVFLILRALGELVLHRPSSGSFVSYAREFFGEKAAYAVGWMYFLHWAMTSIVDTTAIATYLQRWTIFTVVPQWILALIALTVVLSMNLISVEWFGELEFWAALIKVLALMAFLVVGTVFLAGRYPVDGHSTGLSLWNNHGGLFPTSWLPLLIVTSGVVFAYSAVELVGTAAGETAEPEKIMPRAINSVVARIAIFYVGSVALLALLLPYTAYKAGESPFVTFFSKIGFHGAGDLMNIVVLTAALSSLNAGLYSTGRVMHSIAMSGSAPRFTARMSKSGVPYGGIVLTAVITLFGVALNAFKPGEAFEIVLNMSALGIIAGWATIVLCQLRLHKLANAGIMQRPRFRMPFSPYSGYLTLLFLLVVLVTMASDKPIGTWTVATLIIVIPALTAGWYLVRKRVMAVARERLGHTGPFPAVANPPVRSRD</sequence>
<dbReference type="EMBL" id="AL123456">
    <property type="protein sequence ID" value="CCP44902.1"/>
    <property type="molecule type" value="Genomic_DNA"/>
</dbReference>
<dbReference type="PIR" id="B70514">
    <property type="entry name" value="B70514"/>
</dbReference>
<dbReference type="RefSeq" id="WP_003899182.1">
    <property type="nucleotide sequence ID" value="NZ_NVQJ01000044.1"/>
</dbReference>
<dbReference type="RefSeq" id="YP_177863.1">
    <property type="nucleotide sequence ID" value="NC_000962.3"/>
</dbReference>
<dbReference type="SMR" id="P9WQM9"/>
<dbReference type="FunCoup" id="P9WQM9">
    <property type="interactions" value="30"/>
</dbReference>
<dbReference type="STRING" id="83332.Rv2127"/>
<dbReference type="PaxDb" id="83332-Rv2127"/>
<dbReference type="DNASU" id="887715"/>
<dbReference type="GeneID" id="887715"/>
<dbReference type="KEGG" id="mtu:Rv2127"/>
<dbReference type="KEGG" id="mtv:RVBD_2127"/>
<dbReference type="TubercuList" id="Rv2127"/>
<dbReference type="eggNOG" id="COG1113">
    <property type="taxonomic scope" value="Bacteria"/>
</dbReference>
<dbReference type="InParanoid" id="P9WQM9"/>
<dbReference type="OrthoDB" id="5297508at2"/>
<dbReference type="PhylomeDB" id="P9WQM9"/>
<dbReference type="Proteomes" id="UP000001584">
    <property type="component" value="Chromosome"/>
</dbReference>
<dbReference type="GO" id="GO:0005576">
    <property type="term" value="C:extracellular region"/>
    <property type="evidence" value="ECO:0007005"/>
    <property type="project" value="MTBBASE"/>
</dbReference>
<dbReference type="GO" id="GO:0005886">
    <property type="term" value="C:plasma membrane"/>
    <property type="evidence" value="ECO:0007669"/>
    <property type="project" value="UniProtKB-SubCell"/>
</dbReference>
<dbReference type="GO" id="GO:0006865">
    <property type="term" value="P:amino acid transport"/>
    <property type="evidence" value="ECO:0007669"/>
    <property type="project" value="UniProtKB-KW"/>
</dbReference>
<dbReference type="GO" id="GO:0055085">
    <property type="term" value="P:transmembrane transport"/>
    <property type="evidence" value="ECO:0007669"/>
    <property type="project" value="InterPro"/>
</dbReference>
<dbReference type="FunFam" id="1.20.1740.10:FF:000001">
    <property type="entry name" value="Amino acid permease"/>
    <property type="match status" value="1"/>
</dbReference>
<dbReference type="Gene3D" id="1.20.1740.10">
    <property type="entry name" value="Amino acid/polyamine transporter I"/>
    <property type="match status" value="1"/>
</dbReference>
<dbReference type="InterPro" id="IPR004841">
    <property type="entry name" value="AA-permease/SLC12A_dom"/>
</dbReference>
<dbReference type="InterPro" id="IPR004840">
    <property type="entry name" value="Amino_acid_permease_CS"/>
</dbReference>
<dbReference type="PANTHER" id="PTHR43495">
    <property type="entry name" value="GABA PERMEASE"/>
    <property type="match status" value="1"/>
</dbReference>
<dbReference type="PANTHER" id="PTHR43495:SF1">
    <property type="entry name" value="L-ASPARAGINE PERMEASE"/>
    <property type="match status" value="1"/>
</dbReference>
<dbReference type="Pfam" id="PF00324">
    <property type="entry name" value="AA_permease"/>
    <property type="match status" value="1"/>
</dbReference>
<dbReference type="PIRSF" id="PIRSF006060">
    <property type="entry name" value="AA_transporter"/>
    <property type="match status" value="1"/>
</dbReference>
<dbReference type="PROSITE" id="PS00218">
    <property type="entry name" value="AMINO_ACID_PERMEASE_1"/>
    <property type="match status" value="1"/>
</dbReference>
<reference key="1">
    <citation type="journal article" date="1998" name="Nature">
        <title>Deciphering the biology of Mycobacterium tuberculosis from the complete genome sequence.</title>
        <authorList>
            <person name="Cole S.T."/>
            <person name="Brosch R."/>
            <person name="Parkhill J."/>
            <person name="Garnier T."/>
            <person name="Churcher C.M."/>
            <person name="Harris D.E."/>
            <person name="Gordon S.V."/>
            <person name="Eiglmeier K."/>
            <person name="Gas S."/>
            <person name="Barry C.E. III"/>
            <person name="Tekaia F."/>
            <person name="Badcock K."/>
            <person name="Basham D."/>
            <person name="Brown D."/>
            <person name="Chillingworth T."/>
            <person name="Connor R."/>
            <person name="Davies R.M."/>
            <person name="Devlin K."/>
            <person name="Feltwell T."/>
            <person name="Gentles S."/>
            <person name="Hamlin N."/>
            <person name="Holroyd S."/>
            <person name="Hornsby T."/>
            <person name="Jagels K."/>
            <person name="Krogh A."/>
            <person name="McLean J."/>
            <person name="Moule S."/>
            <person name="Murphy L.D."/>
            <person name="Oliver S."/>
            <person name="Osborne J."/>
            <person name="Quail M.A."/>
            <person name="Rajandream M.A."/>
            <person name="Rogers J."/>
            <person name="Rutter S."/>
            <person name="Seeger K."/>
            <person name="Skelton S."/>
            <person name="Squares S."/>
            <person name="Squares R."/>
            <person name="Sulston J.E."/>
            <person name="Taylor K."/>
            <person name="Whitehead S."/>
            <person name="Barrell B.G."/>
        </authorList>
    </citation>
    <scope>NUCLEOTIDE SEQUENCE [LARGE SCALE GENOMIC DNA]</scope>
    <source>
        <strain>ATCC 25618 / H37Rv</strain>
    </source>
</reference>
<reference key="2">
    <citation type="journal article" date="2011" name="Mol. Cell. Proteomics">
        <title>Proteogenomic analysis of Mycobacterium tuberculosis by high resolution mass spectrometry.</title>
        <authorList>
            <person name="Kelkar D.S."/>
            <person name="Kumar D."/>
            <person name="Kumar P."/>
            <person name="Balakrishnan L."/>
            <person name="Muthusamy B."/>
            <person name="Yadav A.K."/>
            <person name="Shrivastava P."/>
            <person name="Marimuthu A."/>
            <person name="Anand S."/>
            <person name="Sundaram H."/>
            <person name="Kingsbury R."/>
            <person name="Harsha H.C."/>
            <person name="Nair B."/>
            <person name="Prasad T.S."/>
            <person name="Chauhan D.S."/>
            <person name="Katoch K."/>
            <person name="Katoch V.M."/>
            <person name="Kumar P."/>
            <person name="Chaerkady R."/>
            <person name="Ramachandran S."/>
            <person name="Dash D."/>
            <person name="Pandey A."/>
        </authorList>
    </citation>
    <scope>IDENTIFICATION BY MASS SPECTROMETRY [LARGE SCALE ANALYSIS]</scope>
    <source>
        <strain>ATCC 25618 / H37Rv</strain>
    </source>
</reference>
<organism>
    <name type="scientific">Mycobacterium tuberculosis (strain ATCC 25618 / H37Rv)</name>
    <dbReference type="NCBI Taxonomy" id="83332"/>
    <lineage>
        <taxon>Bacteria</taxon>
        <taxon>Bacillati</taxon>
        <taxon>Actinomycetota</taxon>
        <taxon>Actinomycetes</taxon>
        <taxon>Mycobacteriales</taxon>
        <taxon>Mycobacteriaceae</taxon>
        <taxon>Mycobacterium</taxon>
        <taxon>Mycobacterium tuberculosis complex</taxon>
    </lineage>
</organism>
<evidence type="ECO:0000250" key="1"/>
<evidence type="ECO:0000255" key="2"/>
<evidence type="ECO:0000305" key="3"/>
<comment type="subcellular location">
    <subcellularLocation>
        <location evidence="1">Cell membrane</location>
        <topology evidence="1">Multi-pass membrane protein</topology>
    </subcellularLocation>
</comment>
<comment type="similarity">
    <text evidence="3">Belongs to the amino acid-polyamine-organocation (APC) superfamily. Amino acid transporter (AAT) (TC 2.A.3.1) family.</text>
</comment>
<keyword id="KW-0029">Amino-acid transport</keyword>
<keyword id="KW-1003">Cell membrane</keyword>
<keyword id="KW-0472">Membrane</keyword>
<keyword id="KW-1185">Reference proteome</keyword>
<keyword id="KW-0812">Transmembrane</keyword>
<keyword id="KW-1133">Transmembrane helix</keyword>
<keyword id="KW-0813">Transport</keyword>